<feature type="initiator methionine" description="Removed" evidence="1">
    <location>
        <position position="1"/>
    </location>
</feature>
<feature type="chain" id="PRO_0000163566" description="Large ribosomal subunit protein bL19">
    <location>
        <begin position="2"/>
        <end position="117"/>
    </location>
</feature>
<reference key="1">
    <citation type="journal article" date="2003" name="Lancet">
        <title>Genome sequence of Vibrio parahaemolyticus: a pathogenic mechanism distinct from that of V. cholerae.</title>
        <authorList>
            <person name="Makino K."/>
            <person name="Oshima K."/>
            <person name="Kurokawa K."/>
            <person name="Yokoyama K."/>
            <person name="Uda T."/>
            <person name="Tagomori K."/>
            <person name="Iijima Y."/>
            <person name="Najima M."/>
            <person name="Nakano M."/>
            <person name="Yamashita A."/>
            <person name="Kubota Y."/>
            <person name="Kimura S."/>
            <person name="Yasunaga T."/>
            <person name="Honda T."/>
            <person name="Shinagawa H."/>
            <person name="Hattori M."/>
            <person name="Iida T."/>
        </authorList>
    </citation>
    <scope>NUCLEOTIDE SEQUENCE [LARGE SCALE GENOMIC DNA]</scope>
    <source>
        <strain>RIMD 2210633</strain>
    </source>
</reference>
<accession>Q87LT1</accession>
<keyword id="KW-0687">Ribonucleoprotein</keyword>
<keyword id="KW-0689">Ribosomal protein</keyword>
<comment type="function">
    <text evidence="2">This protein is located at the 30S-50S ribosomal subunit interface and may play a role in the structure and function of the aminoacyl-tRNA binding site.</text>
</comment>
<comment type="similarity">
    <text evidence="2">Belongs to the bacterial ribosomal protein bL19 family.</text>
</comment>
<sequence>MSNIIKALEEEQMKSGLPKFAPGDTVVVQVKVKEGDRERLQAFEGVVIAIRNRGLHSAFTVRKISNGEGVERTFQTHSPIVDSIEVKRRGAVRRAKLYYLRERSGKSARIKEKLAKK</sequence>
<proteinExistence type="inferred from homology"/>
<gene>
    <name evidence="2" type="primary">rplS</name>
    <name type="ordered locus">VP2530</name>
</gene>
<organism>
    <name type="scientific">Vibrio parahaemolyticus serotype O3:K6 (strain RIMD 2210633)</name>
    <dbReference type="NCBI Taxonomy" id="223926"/>
    <lineage>
        <taxon>Bacteria</taxon>
        <taxon>Pseudomonadati</taxon>
        <taxon>Pseudomonadota</taxon>
        <taxon>Gammaproteobacteria</taxon>
        <taxon>Vibrionales</taxon>
        <taxon>Vibrionaceae</taxon>
        <taxon>Vibrio</taxon>
    </lineage>
</organism>
<evidence type="ECO:0000250" key="1"/>
<evidence type="ECO:0000255" key="2">
    <source>
        <dbReference type="HAMAP-Rule" id="MF_00402"/>
    </source>
</evidence>
<evidence type="ECO:0000305" key="3"/>
<name>RL19_VIBPA</name>
<protein>
    <recommendedName>
        <fullName evidence="2">Large ribosomal subunit protein bL19</fullName>
    </recommendedName>
    <alternativeName>
        <fullName evidence="3">50S ribosomal protein L19</fullName>
    </alternativeName>
</protein>
<dbReference type="EMBL" id="BA000031">
    <property type="protein sequence ID" value="BAC60793.1"/>
    <property type="molecule type" value="Genomic_DNA"/>
</dbReference>
<dbReference type="RefSeq" id="NP_798909.1">
    <property type="nucleotide sequence ID" value="NC_004603.1"/>
</dbReference>
<dbReference type="RefSeq" id="WP_005462554.1">
    <property type="nucleotide sequence ID" value="NC_004603.1"/>
</dbReference>
<dbReference type="SMR" id="Q87LT1"/>
<dbReference type="GeneID" id="1190045"/>
<dbReference type="KEGG" id="vpa:VP2530"/>
<dbReference type="PATRIC" id="fig|223926.6.peg.2427"/>
<dbReference type="eggNOG" id="COG0335">
    <property type="taxonomic scope" value="Bacteria"/>
</dbReference>
<dbReference type="HOGENOM" id="CLU_103507_2_1_6"/>
<dbReference type="Proteomes" id="UP000002493">
    <property type="component" value="Chromosome 1"/>
</dbReference>
<dbReference type="GO" id="GO:0022625">
    <property type="term" value="C:cytosolic large ribosomal subunit"/>
    <property type="evidence" value="ECO:0007669"/>
    <property type="project" value="TreeGrafter"/>
</dbReference>
<dbReference type="GO" id="GO:0003735">
    <property type="term" value="F:structural constituent of ribosome"/>
    <property type="evidence" value="ECO:0007669"/>
    <property type="project" value="InterPro"/>
</dbReference>
<dbReference type="GO" id="GO:0006412">
    <property type="term" value="P:translation"/>
    <property type="evidence" value="ECO:0007669"/>
    <property type="project" value="UniProtKB-UniRule"/>
</dbReference>
<dbReference type="FunFam" id="2.30.30.790:FF:000001">
    <property type="entry name" value="50S ribosomal protein L19"/>
    <property type="match status" value="1"/>
</dbReference>
<dbReference type="Gene3D" id="2.30.30.790">
    <property type="match status" value="1"/>
</dbReference>
<dbReference type="HAMAP" id="MF_00402">
    <property type="entry name" value="Ribosomal_bL19"/>
    <property type="match status" value="1"/>
</dbReference>
<dbReference type="InterPro" id="IPR001857">
    <property type="entry name" value="Ribosomal_bL19"/>
</dbReference>
<dbReference type="InterPro" id="IPR018257">
    <property type="entry name" value="Ribosomal_bL19_CS"/>
</dbReference>
<dbReference type="InterPro" id="IPR038657">
    <property type="entry name" value="Ribosomal_bL19_sf"/>
</dbReference>
<dbReference type="InterPro" id="IPR008991">
    <property type="entry name" value="Translation_prot_SH3-like_sf"/>
</dbReference>
<dbReference type="NCBIfam" id="TIGR01024">
    <property type="entry name" value="rplS_bact"/>
    <property type="match status" value="1"/>
</dbReference>
<dbReference type="PANTHER" id="PTHR15680:SF9">
    <property type="entry name" value="LARGE RIBOSOMAL SUBUNIT PROTEIN BL19M"/>
    <property type="match status" value="1"/>
</dbReference>
<dbReference type="PANTHER" id="PTHR15680">
    <property type="entry name" value="RIBOSOMAL PROTEIN L19"/>
    <property type="match status" value="1"/>
</dbReference>
<dbReference type="Pfam" id="PF01245">
    <property type="entry name" value="Ribosomal_L19"/>
    <property type="match status" value="1"/>
</dbReference>
<dbReference type="PIRSF" id="PIRSF002191">
    <property type="entry name" value="Ribosomal_L19"/>
    <property type="match status" value="1"/>
</dbReference>
<dbReference type="PRINTS" id="PR00061">
    <property type="entry name" value="RIBOSOMALL19"/>
</dbReference>
<dbReference type="SUPFAM" id="SSF50104">
    <property type="entry name" value="Translation proteins SH3-like domain"/>
    <property type="match status" value="1"/>
</dbReference>
<dbReference type="PROSITE" id="PS01015">
    <property type="entry name" value="RIBOSOMAL_L19"/>
    <property type="match status" value="1"/>
</dbReference>